<sequence length="715" mass="83674">MAAELPFYIASSVEELVKKHVEGVEVDKNYSIFHYLSTCNNLVKQADIYKSEGDIERTYIYSLRFCILIFEKLQKHPDFNKESFTKSRNEIKRKAELKLKELEGLKETLKKGYERIQHKKEEERKRIEREKEKERIFKQEKLKLEREQQLLREEEEQRKREDLELESEIQRLKEVEDFENRKLQAQKNIKRATSARTFELLRQEALLEERKRLQGIETEKKRILAEKQEALEKEFQQQLFEQQEKERLEKERLEKEEQLRLASLPPPPPDYSSFDSDQLLNLIENNNKKLENNNQTDDKLDNEFLLDPSFLPPPPPIITQPSPSQEKKDNNNNNNNKNTTAQLPLSITQPPHMPNNEKKLPPIYNSTSPIQFGYPSLNNSVNNPPSFSLQNNTPLIQQYKQQQQQQPIQSPTNNINRPNIPQYNNYNAKPLSSNLNPLPPQYQPQQQQQYQQQQQQQQYQQQQQYQQQQQQQQQQQQQQQHQLPKLPQYQPIENKSISANGLAQSPAVNTPSITPTTNKPNIDSSEASKKYSKLRKIIVHGEVFQEFMRLAENNTKRSIETCGILSGTLSNDVFRITTIIIPKQEGTTDTCNTIEEHEIFEYQLENDLLTLGWIHTHPTQDCFLSAVDVHTHCSYQYLLQEAIAVVISPMANPNFGIFRLTDPPGLETVQKCKLKSFHPHPPVNGIPIYTKVDHVDLIWGKKSDSKVVDLRFLKK</sequence>
<comment type="function">
    <text evidence="1">May be a zinc metalloprotease that specifically cleaves ubiquitin chains.</text>
</comment>
<comment type="cofactor">
    <cofactor evidence="1">
        <name>Zn(2+)</name>
        <dbReference type="ChEBI" id="CHEBI:29105"/>
    </cofactor>
    <text evidence="1">Binds 2 Zn(2+) ions per subunit.</text>
</comment>
<comment type="domain">
    <text evidence="1">The JAMM motif is essential for the protease activity.</text>
</comment>
<comment type="similarity">
    <text evidence="5">Belongs to the peptidase M67C family.</text>
</comment>
<gene>
    <name type="primary">DG1039</name>
    <name type="ORF">DDB_G0284037</name>
</gene>
<feature type="chain" id="PRO_0000388781" description="Probable ubiquitin thioesterase DG1039">
    <location>
        <begin position="1"/>
        <end position="715"/>
    </location>
</feature>
<feature type="domain" description="MPN" evidence="3">
    <location>
        <begin position="537"/>
        <end position="666"/>
    </location>
</feature>
<feature type="region of interest" description="Disordered" evidence="4">
    <location>
        <begin position="287"/>
        <end position="367"/>
    </location>
</feature>
<feature type="region of interest" description="Disordered" evidence="4">
    <location>
        <begin position="398"/>
        <end position="450"/>
    </location>
</feature>
<feature type="region of interest" description="Disordered" evidence="4">
    <location>
        <begin position="502"/>
        <end position="527"/>
    </location>
</feature>
<feature type="coiled-coil region" evidence="2">
    <location>
        <begin position="86"/>
        <end position="302"/>
    </location>
</feature>
<feature type="short sequence motif" description="JAMM motif" evidence="3">
    <location>
        <begin position="615"/>
        <end position="628"/>
    </location>
</feature>
<feature type="compositionally biased region" description="Basic and acidic residues" evidence="4">
    <location>
        <begin position="287"/>
        <end position="302"/>
    </location>
</feature>
<feature type="compositionally biased region" description="Polar residues" evidence="4">
    <location>
        <begin position="339"/>
        <end position="349"/>
    </location>
</feature>
<feature type="compositionally biased region" description="Low complexity" evidence="4">
    <location>
        <begin position="398"/>
        <end position="409"/>
    </location>
</feature>
<feature type="compositionally biased region" description="Polar residues" evidence="4">
    <location>
        <begin position="410"/>
        <end position="427"/>
    </location>
</feature>
<feature type="compositionally biased region" description="Polar residues" evidence="4">
    <location>
        <begin position="502"/>
        <end position="525"/>
    </location>
</feature>
<feature type="binding site" evidence="3">
    <location>
        <position position="615"/>
    </location>
    <ligand>
        <name>Zn(2+)</name>
        <dbReference type="ChEBI" id="CHEBI:29105"/>
        <label>1</label>
        <note>catalytic</note>
    </ligand>
</feature>
<feature type="binding site" evidence="3">
    <location>
        <position position="617"/>
    </location>
    <ligand>
        <name>Zn(2+)</name>
        <dbReference type="ChEBI" id="CHEBI:29105"/>
        <label>1</label>
        <note>catalytic</note>
    </ligand>
</feature>
<feature type="binding site" evidence="3">
    <location>
        <position position="628"/>
    </location>
    <ligand>
        <name>Zn(2+)</name>
        <dbReference type="ChEBI" id="CHEBI:29105"/>
        <label>1</label>
        <note>catalytic</note>
    </ligand>
</feature>
<feature type="binding site" evidence="1">
    <location>
        <position position="630"/>
    </location>
    <ligand>
        <name>Zn(2+)</name>
        <dbReference type="ChEBI" id="CHEBI:29105"/>
        <label>2</label>
    </ligand>
</feature>
<feature type="binding site" evidence="1">
    <location>
        <position position="672"/>
    </location>
    <ligand>
        <name>Zn(2+)</name>
        <dbReference type="ChEBI" id="CHEBI:29105"/>
        <label>2</label>
    </ligand>
</feature>
<feature type="binding site" evidence="1">
    <location>
        <position position="678"/>
    </location>
    <ligand>
        <name>Zn(2+)</name>
        <dbReference type="ChEBI" id="CHEBI:29105"/>
        <label>2</label>
    </ligand>
</feature>
<feature type="binding site" evidence="1">
    <location>
        <position position="680"/>
    </location>
    <ligand>
        <name>Zn(2+)</name>
        <dbReference type="ChEBI" id="CHEBI:29105"/>
        <label>2</label>
    </ligand>
</feature>
<feature type="site" description="Indirect zinc-binding" evidence="1">
    <location>
        <position position="560"/>
    </location>
</feature>
<evidence type="ECO:0000250" key="1"/>
<evidence type="ECO:0000255" key="2"/>
<evidence type="ECO:0000255" key="3">
    <source>
        <dbReference type="PROSITE-ProRule" id="PRU01182"/>
    </source>
</evidence>
<evidence type="ECO:0000256" key="4">
    <source>
        <dbReference type="SAM" id="MobiDB-lite"/>
    </source>
</evidence>
<evidence type="ECO:0000305" key="5"/>
<organism>
    <name type="scientific">Dictyostelium discoideum</name>
    <name type="common">Social amoeba</name>
    <dbReference type="NCBI Taxonomy" id="44689"/>
    <lineage>
        <taxon>Eukaryota</taxon>
        <taxon>Amoebozoa</taxon>
        <taxon>Evosea</taxon>
        <taxon>Eumycetozoa</taxon>
        <taxon>Dictyostelia</taxon>
        <taxon>Dictyosteliales</taxon>
        <taxon>Dictyosteliaceae</taxon>
        <taxon>Dictyostelium</taxon>
    </lineage>
</organism>
<proteinExistence type="inferred from homology"/>
<name>D1039_DICDI</name>
<dbReference type="EC" id="3.4.19.-"/>
<dbReference type="EMBL" id="AAFI02000063">
    <property type="protein sequence ID" value="EAL65359.1"/>
    <property type="molecule type" value="Genomic_DNA"/>
</dbReference>
<dbReference type="EMBL" id="AF018638">
    <property type="protein sequence ID" value="AAB82533.1"/>
    <property type="molecule type" value="Genomic_DNA"/>
</dbReference>
<dbReference type="RefSeq" id="XP_638757.1">
    <property type="nucleotide sequence ID" value="XM_633665.1"/>
</dbReference>
<dbReference type="SMR" id="Q54Q40"/>
<dbReference type="FunCoup" id="Q54Q40">
    <property type="interactions" value="161"/>
</dbReference>
<dbReference type="STRING" id="44689.Q54Q40"/>
<dbReference type="MEROPS" id="M67.A15"/>
<dbReference type="PaxDb" id="44689-DDB0191462"/>
<dbReference type="EnsemblProtists" id="EAL65359">
    <property type="protein sequence ID" value="EAL65359"/>
    <property type="gene ID" value="DDB_G0284037"/>
</dbReference>
<dbReference type="GeneID" id="8624428"/>
<dbReference type="KEGG" id="ddi:DDB_G0284037"/>
<dbReference type="dictyBase" id="DDB_G0284037"/>
<dbReference type="VEuPathDB" id="AmoebaDB:DDB_G0284037"/>
<dbReference type="eggNOG" id="KOG2880">
    <property type="taxonomic scope" value="Eukaryota"/>
</dbReference>
<dbReference type="HOGENOM" id="CLU_386589_0_0_1"/>
<dbReference type="InParanoid" id="Q54Q40"/>
<dbReference type="OMA" id="HQLKQGY"/>
<dbReference type="Reactome" id="R-DDI-5689901">
    <property type="pathway name" value="Metalloprotease DUBs"/>
</dbReference>
<dbReference type="PRO" id="PR:Q54Q40"/>
<dbReference type="Proteomes" id="UP000002195">
    <property type="component" value="Chromosome 4"/>
</dbReference>
<dbReference type="GO" id="GO:0005768">
    <property type="term" value="C:endosome"/>
    <property type="evidence" value="ECO:0000318"/>
    <property type="project" value="GO_Central"/>
</dbReference>
<dbReference type="GO" id="GO:0016020">
    <property type="term" value="C:membrane"/>
    <property type="evidence" value="ECO:0000318"/>
    <property type="project" value="GO_Central"/>
</dbReference>
<dbReference type="GO" id="GO:0061578">
    <property type="term" value="F:K63-linked deubiquitinase activity"/>
    <property type="evidence" value="ECO:0000318"/>
    <property type="project" value="GO_Central"/>
</dbReference>
<dbReference type="GO" id="GO:0046872">
    <property type="term" value="F:metal ion binding"/>
    <property type="evidence" value="ECO:0007669"/>
    <property type="project" value="UniProtKB-KW"/>
</dbReference>
<dbReference type="GO" id="GO:0140492">
    <property type="term" value="F:metal-dependent deubiquitinase activity"/>
    <property type="evidence" value="ECO:0007669"/>
    <property type="project" value="InterPro"/>
</dbReference>
<dbReference type="GO" id="GO:0032511">
    <property type="term" value="P:late endosome to vacuole transport via multivesicular body sorting pathway"/>
    <property type="evidence" value="ECO:0000318"/>
    <property type="project" value="GO_Central"/>
</dbReference>
<dbReference type="GO" id="GO:0070536">
    <property type="term" value="P:protein K63-linked deubiquitination"/>
    <property type="evidence" value="ECO:0007669"/>
    <property type="project" value="InterPro"/>
</dbReference>
<dbReference type="GO" id="GO:0006508">
    <property type="term" value="P:proteolysis"/>
    <property type="evidence" value="ECO:0007669"/>
    <property type="project" value="UniProtKB-KW"/>
</dbReference>
<dbReference type="CDD" id="cd08066">
    <property type="entry name" value="MPN_AMSH_like"/>
    <property type="match status" value="1"/>
</dbReference>
<dbReference type="FunFam" id="3.40.140.10:FF:000033">
    <property type="entry name" value="AMSH-like protease sst2"/>
    <property type="match status" value="1"/>
</dbReference>
<dbReference type="FunFam" id="1.20.58.80:FF:000058">
    <property type="entry name" value="Probable ubiquitin thioesterase DG1039"/>
    <property type="match status" value="1"/>
</dbReference>
<dbReference type="Gene3D" id="3.40.140.10">
    <property type="entry name" value="Cytidine Deaminase, domain 2"/>
    <property type="match status" value="1"/>
</dbReference>
<dbReference type="Gene3D" id="1.20.58.80">
    <property type="entry name" value="Phosphotransferase system, lactose/cellobiose-type IIA subunit"/>
    <property type="match status" value="1"/>
</dbReference>
<dbReference type="InterPro" id="IPR000555">
    <property type="entry name" value="JAMM/MPN+_dom"/>
</dbReference>
<dbReference type="InterPro" id="IPR037518">
    <property type="entry name" value="MPN"/>
</dbReference>
<dbReference type="InterPro" id="IPR044098">
    <property type="entry name" value="STAMBP/STALP-like_MPN"/>
</dbReference>
<dbReference type="InterPro" id="IPR015063">
    <property type="entry name" value="USP8_dimer"/>
</dbReference>
<dbReference type="PANTHER" id="PTHR12947">
    <property type="entry name" value="AMSH-LIKE PROTEASE"/>
    <property type="match status" value="1"/>
</dbReference>
<dbReference type="PANTHER" id="PTHR12947:SF13">
    <property type="entry name" value="FI19924P1"/>
    <property type="match status" value="1"/>
</dbReference>
<dbReference type="Pfam" id="PF01398">
    <property type="entry name" value="JAB"/>
    <property type="match status" value="1"/>
</dbReference>
<dbReference type="Pfam" id="PF08969">
    <property type="entry name" value="USP8_dimer"/>
    <property type="match status" value="1"/>
</dbReference>
<dbReference type="SMART" id="SM00232">
    <property type="entry name" value="JAB_MPN"/>
    <property type="match status" value="1"/>
</dbReference>
<dbReference type="SUPFAM" id="SSF102712">
    <property type="entry name" value="JAB1/MPN domain"/>
    <property type="match status" value="1"/>
</dbReference>
<dbReference type="SUPFAM" id="SSF140856">
    <property type="entry name" value="USP8 N-terminal domain-like"/>
    <property type="match status" value="1"/>
</dbReference>
<dbReference type="PROSITE" id="PS50249">
    <property type="entry name" value="MPN"/>
    <property type="match status" value="1"/>
</dbReference>
<reference key="1">
    <citation type="journal article" date="2005" name="Nature">
        <title>The genome of the social amoeba Dictyostelium discoideum.</title>
        <authorList>
            <person name="Eichinger L."/>
            <person name="Pachebat J.A."/>
            <person name="Gloeckner G."/>
            <person name="Rajandream M.A."/>
            <person name="Sucgang R."/>
            <person name="Berriman M."/>
            <person name="Song J."/>
            <person name="Olsen R."/>
            <person name="Szafranski K."/>
            <person name="Xu Q."/>
            <person name="Tunggal B."/>
            <person name="Kummerfeld S."/>
            <person name="Madera M."/>
            <person name="Konfortov B.A."/>
            <person name="Rivero F."/>
            <person name="Bankier A.T."/>
            <person name="Lehmann R."/>
            <person name="Hamlin N."/>
            <person name="Davies R."/>
            <person name="Gaudet P."/>
            <person name="Fey P."/>
            <person name="Pilcher K."/>
            <person name="Chen G."/>
            <person name="Saunders D."/>
            <person name="Sodergren E.J."/>
            <person name="Davis P."/>
            <person name="Kerhornou A."/>
            <person name="Nie X."/>
            <person name="Hall N."/>
            <person name="Anjard C."/>
            <person name="Hemphill L."/>
            <person name="Bason N."/>
            <person name="Farbrother P."/>
            <person name="Desany B."/>
            <person name="Just E."/>
            <person name="Morio T."/>
            <person name="Rost R."/>
            <person name="Churcher C.M."/>
            <person name="Cooper J."/>
            <person name="Haydock S."/>
            <person name="van Driessche N."/>
            <person name="Cronin A."/>
            <person name="Goodhead I."/>
            <person name="Muzny D.M."/>
            <person name="Mourier T."/>
            <person name="Pain A."/>
            <person name="Lu M."/>
            <person name="Harper D."/>
            <person name="Lindsay R."/>
            <person name="Hauser H."/>
            <person name="James K.D."/>
            <person name="Quiles M."/>
            <person name="Madan Babu M."/>
            <person name="Saito T."/>
            <person name="Buchrieser C."/>
            <person name="Wardroper A."/>
            <person name="Felder M."/>
            <person name="Thangavelu M."/>
            <person name="Johnson D."/>
            <person name="Knights A."/>
            <person name="Loulseged H."/>
            <person name="Mungall K.L."/>
            <person name="Oliver K."/>
            <person name="Price C."/>
            <person name="Quail M.A."/>
            <person name="Urushihara H."/>
            <person name="Hernandez J."/>
            <person name="Rabbinowitsch E."/>
            <person name="Steffen D."/>
            <person name="Sanders M."/>
            <person name="Ma J."/>
            <person name="Kohara Y."/>
            <person name="Sharp S."/>
            <person name="Simmonds M.N."/>
            <person name="Spiegler S."/>
            <person name="Tivey A."/>
            <person name="Sugano S."/>
            <person name="White B."/>
            <person name="Walker D."/>
            <person name="Woodward J.R."/>
            <person name="Winckler T."/>
            <person name="Tanaka Y."/>
            <person name="Shaulsky G."/>
            <person name="Schleicher M."/>
            <person name="Weinstock G.M."/>
            <person name="Rosenthal A."/>
            <person name="Cox E.C."/>
            <person name="Chisholm R.L."/>
            <person name="Gibbs R.A."/>
            <person name="Loomis W.F."/>
            <person name="Platzer M."/>
            <person name="Kay R.R."/>
            <person name="Williams J.G."/>
            <person name="Dear P.H."/>
            <person name="Noegel A.A."/>
            <person name="Barrell B.G."/>
            <person name="Kuspa A."/>
        </authorList>
    </citation>
    <scope>NUCLEOTIDE SEQUENCE [LARGE SCALE GENOMIC DNA]</scope>
    <source>
        <strain>AX4</strain>
    </source>
</reference>
<reference key="2">
    <citation type="submission" date="1997-08" db="EMBL/GenBank/DDBJ databases">
        <authorList>
            <person name="Loomis W.F."/>
            <person name="Iranfar N."/>
        </authorList>
    </citation>
    <scope>NUCLEOTIDE SEQUENCE [GENOMIC DNA] OF 271-715</scope>
    <source>
        <strain>AX4</strain>
    </source>
</reference>
<keyword id="KW-0175">Coiled coil</keyword>
<keyword id="KW-0378">Hydrolase</keyword>
<keyword id="KW-0479">Metal-binding</keyword>
<keyword id="KW-0482">Metalloprotease</keyword>
<keyword id="KW-0645">Protease</keyword>
<keyword id="KW-1185">Reference proteome</keyword>
<keyword id="KW-0833">Ubl conjugation pathway</keyword>
<keyword id="KW-0862">Zinc</keyword>
<accession>Q54Q40</accession>
<accession>O15731</accession>
<protein>
    <recommendedName>
        <fullName>Probable ubiquitin thioesterase DG1039</fullName>
        <ecNumber>3.4.19.-</ecNumber>
    </recommendedName>
    <alternativeName>
        <fullName>Developmental gene 1039 protein</fullName>
    </alternativeName>
</protein>